<proteinExistence type="inferred from homology"/>
<organism>
    <name type="scientific">Salmonella paratyphi A (strain ATCC 9150 / SARB42)</name>
    <dbReference type="NCBI Taxonomy" id="295319"/>
    <lineage>
        <taxon>Bacteria</taxon>
        <taxon>Pseudomonadati</taxon>
        <taxon>Pseudomonadota</taxon>
        <taxon>Gammaproteobacteria</taxon>
        <taxon>Enterobacterales</taxon>
        <taxon>Enterobacteriaceae</taxon>
        <taxon>Salmonella</taxon>
    </lineage>
</organism>
<comment type="function">
    <text evidence="1">Catalyzes the formation of 6,7-dimethyl-8-ribityllumazine by condensation of 5-amino-6-(D-ribitylamino)uracil with 3,4-dihydroxy-2-butanone 4-phosphate. This is the penultimate step in the biosynthesis of riboflavin.</text>
</comment>
<comment type="catalytic activity">
    <reaction evidence="1">
        <text>(2S)-2-hydroxy-3-oxobutyl phosphate + 5-amino-6-(D-ribitylamino)uracil = 6,7-dimethyl-8-(1-D-ribityl)lumazine + phosphate + 2 H2O + H(+)</text>
        <dbReference type="Rhea" id="RHEA:26152"/>
        <dbReference type="ChEBI" id="CHEBI:15377"/>
        <dbReference type="ChEBI" id="CHEBI:15378"/>
        <dbReference type="ChEBI" id="CHEBI:15934"/>
        <dbReference type="ChEBI" id="CHEBI:43474"/>
        <dbReference type="ChEBI" id="CHEBI:58201"/>
        <dbReference type="ChEBI" id="CHEBI:58830"/>
        <dbReference type="EC" id="2.5.1.78"/>
    </reaction>
</comment>
<comment type="pathway">
    <text evidence="1">Cofactor biosynthesis; riboflavin biosynthesis; riboflavin from 2-hydroxy-3-oxobutyl phosphate and 5-amino-6-(D-ribitylamino)uracil: step 1/2.</text>
</comment>
<comment type="subunit">
    <text evidence="1">Forms an icosahedral capsid composed of 60 subunits, arranged as a dodecamer of pentamers.</text>
</comment>
<comment type="similarity">
    <text evidence="1">Belongs to the DMRL synthase family.</text>
</comment>
<keyword id="KW-0686">Riboflavin biosynthesis</keyword>
<keyword id="KW-0808">Transferase</keyword>
<gene>
    <name evidence="1" type="primary">ribH</name>
    <name type="ordered locus">SPA2306</name>
</gene>
<sequence>MNIIKANVAAPDARVAITIARFNQFINDSLLDGAVDALTRIGQVKDDNITVVWVPGAYELPLATEALAKSGKYDAVVALGTVIRGGTAHFEYVAGGASNGLASVAQDSGVPVAFGVLTTESIEQAIERAGTKAGNKGAEAALTALEMINVLKAIKA</sequence>
<protein>
    <recommendedName>
        <fullName evidence="1">6,7-dimethyl-8-ribityllumazine synthase</fullName>
        <shortName evidence="1">DMRL synthase</shortName>
        <shortName evidence="1">LS</shortName>
        <shortName evidence="1">Lumazine synthase</shortName>
        <ecNumber evidence="1">2.5.1.78</ecNumber>
    </recommendedName>
</protein>
<accession>Q5PFS8</accession>
<evidence type="ECO:0000255" key="1">
    <source>
        <dbReference type="HAMAP-Rule" id="MF_00178"/>
    </source>
</evidence>
<feature type="chain" id="PRO_1000040504" description="6,7-dimethyl-8-ribityllumazine synthase">
    <location>
        <begin position="1"/>
        <end position="156"/>
    </location>
</feature>
<feature type="active site" description="Proton donor" evidence="1">
    <location>
        <position position="89"/>
    </location>
</feature>
<feature type="binding site" evidence="1">
    <location>
        <position position="22"/>
    </location>
    <ligand>
        <name>5-amino-6-(D-ribitylamino)uracil</name>
        <dbReference type="ChEBI" id="CHEBI:15934"/>
    </ligand>
</feature>
<feature type="binding site" evidence="1">
    <location>
        <begin position="57"/>
        <end position="59"/>
    </location>
    <ligand>
        <name>5-amino-6-(D-ribitylamino)uracil</name>
        <dbReference type="ChEBI" id="CHEBI:15934"/>
    </ligand>
</feature>
<feature type="binding site" evidence="1">
    <location>
        <begin position="81"/>
        <end position="83"/>
    </location>
    <ligand>
        <name>5-amino-6-(D-ribitylamino)uracil</name>
        <dbReference type="ChEBI" id="CHEBI:15934"/>
    </ligand>
</feature>
<feature type="binding site" evidence="1">
    <location>
        <begin position="86"/>
        <end position="87"/>
    </location>
    <ligand>
        <name>(2S)-2-hydroxy-3-oxobutyl phosphate</name>
        <dbReference type="ChEBI" id="CHEBI:58830"/>
    </ligand>
</feature>
<feature type="binding site" evidence="1">
    <location>
        <position position="114"/>
    </location>
    <ligand>
        <name>5-amino-6-(D-ribitylamino)uracil</name>
        <dbReference type="ChEBI" id="CHEBI:15934"/>
    </ligand>
</feature>
<feature type="binding site" evidence="1">
    <location>
        <position position="128"/>
    </location>
    <ligand>
        <name>(2S)-2-hydroxy-3-oxobutyl phosphate</name>
        <dbReference type="ChEBI" id="CHEBI:58830"/>
    </ligand>
</feature>
<reference key="1">
    <citation type="journal article" date="2004" name="Nat. Genet.">
        <title>Comparison of genome degradation in Paratyphi A and Typhi, human-restricted serovars of Salmonella enterica that cause typhoid.</title>
        <authorList>
            <person name="McClelland M."/>
            <person name="Sanderson K.E."/>
            <person name="Clifton S.W."/>
            <person name="Latreille P."/>
            <person name="Porwollik S."/>
            <person name="Sabo A."/>
            <person name="Meyer R."/>
            <person name="Bieri T."/>
            <person name="Ozersky P."/>
            <person name="McLellan M."/>
            <person name="Harkins C.R."/>
            <person name="Wang C."/>
            <person name="Nguyen C."/>
            <person name="Berghoff A."/>
            <person name="Elliott G."/>
            <person name="Kohlberg S."/>
            <person name="Strong C."/>
            <person name="Du F."/>
            <person name="Carter J."/>
            <person name="Kremizki C."/>
            <person name="Layman D."/>
            <person name="Leonard S."/>
            <person name="Sun H."/>
            <person name="Fulton L."/>
            <person name="Nash W."/>
            <person name="Miner T."/>
            <person name="Minx P."/>
            <person name="Delehaunty K."/>
            <person name="Fronick C."/>
            <person name="Magrini V."/>
            <person name="Nhan M."/>
            <person name="Warren W."/>
            <person name="Florea L."/>
            <person name="Spieth J."/>
            <person name="Wilson R.K."/>
        </authorList>
    </citation>
    <scope>NUCLEOTIDE SEQUENCE [LARGE SCALE GENOMIC DNA]</scope>
    <source>
        <strain>ATCC 9150 / SARB42</strain>
    </source>
</reference>
<dbReference type="EC" id="2.5.1.78" evidence="1"/>
<dbReference type="EMBL" id="CP000026">
    <property type="protein sequence ID" value="AAV78191.1"/>
    <property type="molecule type" value="Genomic_DNA"/>
</dbReference>
<dbReference type="SMR" id="Q5PFS8"/>
<dbReference type="KEGG" id="spt:SPA2306"/>
<dbReference type="HOGENOM" id="CLU_089358_1_1_6"/>
<dbReference type="UniPathway" id="UPA00275">
    <property type="reaction ID" value="UER00404"/>
</dbReference>
<dbReference type="Proteomes" id="UP000008185">
    <property type="component" value="Chromosome"/>
</dbReference>
<dbReference type="GO" id="GO:0005829">
    <property type="term" value="C:cytosol"/>
    <property type="evidence" value="ECO:0007669"/>
    <property type="project" value="TreeGrafter"/>
</dbReference>
<dbReference type="GO" id="GO:0009349">
    <property type="term" value="C:riboflavin synthase complex"/>
    <property type="evidence" value="ECO:0007669"/>
    <property type="project" value="InterPro"/>
</dbReference>
<dbReference type="GO" id="GO:0000906">
    <property type="term" value="F:6,7-dimethyl-8-ribityllumazine synthase activity"/>
    <property type="evidence" value="ECO:0007669"/>
    <property type="project" value="UniProtKB-UniRule"/>
</dbReference>
<dbReference type="GO" id="GO:0009231">
    <property type="term" value="P:riboflavin biosynthetic process"/>
    <property type="evidence" value="ECO:0007669"/>
    <property type="project" value="UniProtKB-UniRule"/>
</dbReference>
<dbReference type="CDD" id="cd09209">
    <property type="entry name" value="Lumazine_synthase-I"/>
    <property type="match status" value="1"/>
</dbReference>
<dbReference type="FunFam" id="3.40.50.960:FF:000001">
    <property type="entry name" value="6,7-dimethyl-8-ribityllumazine synthase"/>
    <property type="match status" value="1"/>
</dbReference>
<dbReference type="Gene3D" id="3.40.50.960">
    <property type="entry name" value="Lumazine/riboflavin synthase"/>
    <property type="match status" value="1"/>
</dbReference>
<dbReference type="HAMAP" id="MF_00178">
    <property type="entry name" value="Lumazine_synth"/>
    <property type="match status" value="1"/>
</dbReference>
<dbReference type="InterPro" id="IPR034964">
    <property type="entry name" value="LS"/>
</dbReference>
<dbReference type="InterPro" id="IPR002180">
    <property type="entry name" value="LS/RS"/>
</dbReference>
<dbReference type="InterPro" id="IPR036467">
    <property type="entry name" value="LS/RS_sf"/>
</dbReference>
<dbReference type="NCBIfam" id="TIGR00114">
    <property type="entry name" value="lumazine-synth"/>
    <property type="match status" value="1"/>
</dbReference>
<dbReference type="NCBIfam" id="NF000812">
    <property type="entry name" value="PRK00061.1-4"/>
    <property type="match status" value="1"/>
</dbReference>
<dbReference type="PANTHER" id="PTHR21058:SF0">
    <property type="entry name" value="6,7-DIMETHYL-8-RIBITYLLUMAZINE SYNTHASE"/>
    <property type="match status" value="1"/>
</dbReference>
<dbReference type="PANTHER" id="PTHR21058">
    <property type="entry name" value="6,7-DIMETHYL-8-RIBITYLLUMAZINE SYNTHASE DMRL SYNTHASE LUMAZINE SYNTHASE"/>
    <property type="match status" value="1"/>
</dbReference>
<dbReference type="Pfam" id="PF00885">
    <property type="entry name" value="DMRL_synthase"/>
    <property type="match status" value="1"/>
</dbReference>
<dbReference type="SUPFAM" id="SSF52121">
    <property type="entry name" value="Lumazine synthase"/>
    <property type="match status" value="1"/>
</dbReference>
<name>RISB_SALPA</name>